<protein>
    <recommendedName>
        <fullName>DEAD-box ATP-dependent RNA helicase 42</fullName>
        <ecNumber>3.6.4.13</ecNumber>
    </recommendedName>
</protein>
<evidence type="ECO:0000255" key="1"/>
<evidence type="ECO:0000255" key="2">
    <source>
        <dbReference type="PROSITE-ProRule" id="PRU00541"/>
    </source>
</evidence>
<evidence type="ECO:0000255" key="3">
    <source>
        <dbReference type="PROSITE-ProRule" id="PRU00542"/>
    </source>
</evidence>
<evidence type="ECO:0000256" key="4">
    <source>
        <dbReference type="SAM" id="MobiDB-lite"/>
    </source>
</evidence>
<evidence type="ECO:0000305" key="5"/>
<evidence type="ECO:0000312" key="6">
    <source>
        <dbReference type="EMBL" id="EEE68085.1"/>
    </source>
</evidence>
<comment type="catalytic activity">
    <reaction>
        <text>ATP + H2O = ADP + phosphate + H(+)</text>
        <dbReference type="Rhea" id="RHEA:13065"/>
        <dbReference type="ChEBI" id="CHEBI:15377"/>
        <dbReference type="ChEBI" id="CHEBI:15378"/>
        <dbReference type="ChEBI" id="CHEBI:30616"/>
        <dbReference type="ChEBI" id="CHEBI:43474"/>
        <dbReference type="ChEBI" id="CHEBI:456216"/>
        <dbReference type="EC" id="3.6.4.13"/>
    </reaction>
</comment>
<comment type="domain">
    <text>The Q motif is unique to and characteristic of the DEAD box family of RNA helicases and controls ATP binding and hydrolysis.</text>
</comment>
<comment type="similarity">
    <text evidence="5">Belongs to the DEAD box helicase family. DDX46/PRP5 subfamily.</text>
</comment>
<comment type="sequence caution" evidence="5">
    <conflict type="frameshift">
        <sequence resource="EMBL" id="AK102356"/>
    </conflict>
</comment>
<gene>
    <name type="ordered locus">Os08g0159900</name>
    <name type="ordered locus">LOC_Os08g06344</name>
    <name evidence="6" type="ORF">OsJ_26125</name>
    <name type="ORF">P0498E12.131</name>
    <name type="ORF">P0672D01.114</name>
</gene>
<reference key="1">
    <citation type="journal article" date="2005" name="Nature">
        <title>The map-based sequence of the rice genome.</title>
        <authorList>
            <consortium name="International rice genome sequencing project (IRGSP)"/>
        </authorList>
    </citation>
    <scope>NUCLEOTIDE SEQUENCE [LARGE SCALE GENOMIC DNA]</scope>
    <source>
        <strain>cv. Nipponbare</strain>
    </source>
</reference>
<reference key="2">
    <citation type="journal article" date="2008" name="Nucleic Acids Res.">
        <title>The rice annotation project database (RAP-DB): 2008 update.</title>
        <authorList>
            <consortium name="The rice annotation project (RAP)"/>
        </authorList>
    </citation>
    <scope>GENOME REANNOTATION</scope>
    <source>
        <strain>cv. Nipponbare</strain>
    </source>
</reference>
<reference key="3">
    <citation type="journal article" date="2013" name="Rice">
        <title>Improvement of the Oryza sativa Nipponbare reference genome using next generation sequence and optical map data.</title>
        <authorList>
            <person name="Kawahara Y."/>
            <person name="de la Bastide M."/>
            <person name="Hamilton J.P."/>
            <person name="Kanamori H."/>
            <person name="McCombie W.R."/>
            <person name="Ouyang S."/>
            <person name="Schwartz D.C."/>
            <person name="Tanaka T."/>
            <person name="Wu J."/>
            <person name="Zhou S."/>
            <person name="Childs K.L."/>
            <person name="Davidson R.M."/>
            <person name="Lin H."/>
            <person name="Quesada-Ocampo L."/>
            <person name="Vaillancourt B."/>
            <person name="Sakai H."/>
            <person name="Lee S.S."/>
            <person name="Kim J."/>
            <person name="Numa H."/>
            <person name="Itoh T."/>
            <person name="Buell C.R."/>
            <person name="Matsumoto T."/>
        </authorList>
    </citation>
    <scope>GENOME REANNOTATION</scope>
    <source>
        <strain>cv. Nipponbare</strain>
    </source>
</reference>
<reference key="4">
    <citation type="journal article" date="2005" name="PLoS Biol.">
        <title>The genomes of Oryza sativa: a history of duplications.</title>
        <authorList>
            <person name="Yu J."/>
            <person name="Wang J."/>
            <person name="Lin W."/>
            <person name="Li S."/>
            <person name="Li H."/>
            <person name="Zhou J."/>
            <person name="Ni P."/>
            <person name="Dong W."/>
            <person name="Hu S."/>
            <person name="Zeng C."/>
            <person name="Zhang J."/>
            <person name="Zhang Y."/>
            <person name="Li R."/>
            <person name="Xu Z."/>
            <person name="Li S."/>
            <person name="Li X."/>
            <person name="Zheng H."/>
            <person name="Cong L."/>
            <person name="Lin L."/>
            <person name="Yin J."/>
            <person name="Geng J."/>
            <person name="Li G."/>
            <person name="Shi J."/>
            <person name="Liu J."/>
            <person name="Lv H."/>
            <person name="Li J."/>
            <person name="Wang J."/>
            <person name="Deng Y."/>
            <person name="Ran L."/>
            <person name="Shi X."/>
            <person name="Wang X."/>
            <person name="Wu Q."/>
            <person name="Li C."/>
            <person name="Ren X."/>
            <person name="Wang J."/>
            <person name="Wang X."/>
            <person name="Li D."/>
            <person name="Liu D."/>
            <person name="Zhang X."/>
            <person name="Ji Z."/>
            <person name="Zhao W."/>
            <person name="Sun Y."/>
            <person name="Zhang Z."/>
            <person name="Bao J."/>
            <person name="Han Y."/>
            <person name="Dong L."/>
            <person name="Ji J."/>
            <person name="Chen P."/>
            <person name="Wu S."/>
            <person name="Liu J."/>
            <person name="Xiao Y."/>
            <person name="Bu D."/>
            <person name="Tan J."/>
            <person name="Yang L."/>
            <person name="Ye C."/>
            <person name="Zhang J."/>
            <person name="Xu J."/>
            <person name="Zhou Y."/>
            <person name="Yu Y."/>
            <person name="Zhang B."/>
            <person name="Zhuang S."/>
            <person name="Wei H."/>
            <person name="Liu B."/>
            <person name="Lei M."/>
            <person name="Yu H."/>
            <person name="Li Y."/>
            <person name="Xu H."/>
            <person name="Wei S."/>
            <person name="He X."/>
            <person name="Fang L."/>
            <person name="Zhang Z."/>
            <person name="Zhang Y."/>
            <person name="Huang X."/>
            <person name="Su Z."/>
            <person name="Tong W."/>
            <person name="Li J."/>
            <person name="Tong Z."/>
            <person name="Li S."/>
            <person name="Ye J."/>
            <person name="Wang L."/>
            <person name="Fang L."/>
            <person name="Lei T."/>
            <person name="Chen C.-S."/>
            <person name="Chen H.-C."/>
            <person name="Xu Z."/>
            <person name="Li H."/>
            <person name="Huang H."/>
            <person name="Zhang F."/>
            <person name="Xu H."/>
            <person name="Li N."/>
            <person name="Zhao C."/>
            <person name="Li S."/>
            <person name="Dong L."/>
            <person name="Huang Y."/>
            <person name="Li L."/>
            <person name="Xi Y."/>
            <person name="Qi Q."/>
            <person name="Li W."/>
            <person name="Zhang B."/>
            <person name="Hu W."/>
            <person name="Zhang Y."/>
            <person name="Tian X."/>
            <person name="Jiao Y."/>
            <person name="Liang X."/>
            <person name="Jin J."/>
            <person name="Gao L."/>
            <person name="Zheng W."/>
            <person name="Hao B."/>
            <person name="Liu S.-M."/>
            <person name="Wang W."/>
            <person name="Yuan L."/>
            <person name="Cao M."/>
            <person name="McDermott J."/>
            <person name="Samudrala R."/>
            <person name="Wang J."/>
            <person name="Wong G.K.-S."/>
            <person name="Yang H."/>
        </authorList>
    </citation>
    <scope>NUCLEOTIDE SEQUENCE [LARGE SCALE GENOMIC DNA]</scope>
    <source>
        <strain>cv. Nipponbare</strain>
    </source>
</reference>
<reference key="5">
    <citation type="journal article" date="2003" name="Science">
        <title>Collection, mapping, and annotation of over 28,000 cDNA clones from japonica rice.</title>
        <authorList>
            <consortium name="The rice full-length cDNA consortium"/>
        </authorList>
    </citation>
    <scope>NUCLEOTIDE SEQUENCE [LARGE SCALE MRNA]</scope>
    <source>
        <strain>cv. Nipponbare</strain>
    </source>
</reference>
<proteinExistence type="evidence at transcript level"/>
<name>RH42_ORYSJ</name>
<feature type="chain" id="PRO_0000282501" description="DEAD-box ATP-dependent RNA helicase 42">
    <location>
        <begin position="1"/>
        <end position="1049"/>
    </location>
</feature>
<feature type="domain" description="Helicase ATP-binding" evidence="2">
    <location>
        <begin position="455"/>
        <end position="633"/>
    </location>
</feature>
<feature type="domain" description="Helicase C-terminal" evidence="3">
    <location>
        <begin position="644"/>
        <end position="805"/>
    </location>
</feature>
<feature type="region of interest" description="Disordered" evidence="4">
    <location>
        <begin position="1"/>
        <end position="279"/>
    </location>
</feature>
<feature type="region of interest" description="Disordered" evidence="4">
    <location>
        <begin position="299"/>
        <end position="358"/>
    </location>
</feature>
<feature type="region of interest" description="Disordered" evidence="4">
    <location>
        <begin position="816"/>
        <end position="868"/>
    </location>
</feature>
<feature type="coiled-coil region" evidence="1">
    <location>
        <begin position="1012"/>
        <end position="1037"/>
    </location>
</feature>
<feature type="short sequence motif" description="Q motif">
    <location>
        <begin position="424"/>
        <end position="452"/>
    </location>
</feature>
<feature type="short sequence motif" description="DEAD box">
    <location>
        <begin position="581"/>
        <end position="584"/>
    </location>
</feature>
<feature type="compositionally biased region" description="Basic and acidic residues" evidence="4">
    <location>
        <begin position="64"/>
        <end position="106"/>
    </location>
</feature>
<feature type="compositionally biased region" description="Basic residues" evidence="4">
    <location>
        <begin position="118"/>
        <end position="131"/>
    </location>
</feature>
<feature type="compositionally biased region" description="Basic and acidic residues" evidence="4">
    <location>
        <begin position="161"/>
        <end position="170"/>
    </location>
</feature>
<feature type="compositionally biased region" description="Basic and acidic residues" evidence="4">
    <location>
        <begin position="181"/>
        <end position="199"/>
    </location>
</feature>
<feature type="compositionally biased region" description="Low complexity" evidence="4">
    <location>
        <begin position="201"/>
        <end position="214"/>
    </location>
</feature>
<feature type="compositionally biased region" description="Acidic residues" evidence="4">
    <location>
        <begin position="229"/>
        <end position="239"/>
    </location>
</feature>
<feature type="compositionally biased region" description="Low complexity" evidence="4">
    <location>
        <begin position="262"/>
        <end position="272"/>
    </location>
</feature>
<feature type="compositionally biased region" description="Basic and acidic residues" evidence="4">
    <location>
        <begin position="304"/>
        <end position="313"/>
    </location>
</feature>
<feature type="compositionally biased region" description="Acidic residues" evidence="4">
    <location>
        <begin position="335"/>
        <end position="358"/>
    </location>
</feature>
<feature type="compositionally biased region" description="Acidic residues" evidence="4">
    <location>
        <begin position="855"/>
        <end position="864"/>
    </location>
</feature>
<feature type="binding site" evidence="2">
    <location>
        <begin position="468"/>
        <end position="475"/>
    </location>
    <ligand>
        <name>ATP</name>
        <dbReference type="ChEBI" id="CHEBI:30616"/>
    </ligand>
</feature>
<feature type="sequence conflict" description="In Ref. 5; AK102356." evidence="5" ref="5">
    <original>Q</original>
    <variation>K</variation>
    <location>
        <position position="159"/>
    </location>
</feature>
<feature type="sequence conflict" description="In Ref. 5; AK102356." evidence="5" ref="5">
    <original>A</original>
    <variation>V</variation>
    <location>
        <position position="876"/>
    </location>
</feature>
<feature type="sequence conflict" description="In Ref. 5; AK102356." evidence="5" ref="5">
    <original>S</original>
    <variation>A</variation>
    <location>
        <position position="905"/>
    </location>
</feature>
<keyword id="KW-0067">ATP-binding</keyword>
<keyword id="KW-0175">Coiled coil</keyword>
<keyword id="KW-0347">Helicase</keyword>
<keyword id="KW-0378">Hydrolase</keyword>
<keyword id="KW-0547">Nucleotide-binding</keyword>
<keyword id="KW-1185">Reference proteome</keyword>
<keyword id="KW-0694">RNA-binding</keyword>
<organism>
    <name type="scientific">Oryza sativa subsp. japonica</name>
    <name type="common">Rice</name>
    <dbReference type="NCBI Taxonomy" id="39947"/>
    <lineage>
        <taxon>Eukaryota</taxon>
        <taxon>Viridiplantae</taxon>
        <taxon>Streptophyta</taxon>
        <taxon>Embryophyta</taxon>
        <taxon>Tracheophyta</taxon>
        <taxon>Spermatophyta</taxon>
        <taxon>Magnoliopsida</taxon>
        <taxon>Liliopsida</taxon>
        <taxon>Poales</taxon>
        <taxon>Poaceae</taxon>
        <taxon>BOP clade</taxon>
        <taxon>Oryzoideae</taxon>
        <taxon>Oryzeae</taxon>
        <taxon>Oryzinae</taxon>
        <taxon>Oryza</taxon>
        <taxon>Oryza sativa</taxon>
    </lineage>
</organism>
<dbReference type="EC" id="3.6.4.13"/>
<dbReference type="EMBL" id="AP004635">
    <property type="protein sequence ID" value="BAC66730.1"/>
    <property type="molecule type" value="Genomic_DNA"/>
</dbReference>
<dbReference type="EMBL" id="AP004698">
    <property type="protein sequence ID" value="BAC99664.1"/>
    <property type="molecule type" value="Genomic_DNA"/>
</dbReference>
<dbReference type="EMBL" id="AP008214">
    <property type="protein sequence ID" value="BAF22959.1"/>
    <property type="molecule type" value="Genomic_DNA"/>
</dbReference>
<dbReference type="EMBL" id="AP014964">
    <property type="protein sequence ID" value="BAT03927.1"/>
    <property type="molecule type" value="Genomic_DNA"/>
</dbReference>
<dbReference type="EMBL" id="CM000145">
    <property type="protein sequence ID" value="EEE68085.1"/>
    <property type="molecule type" value="Genomic_DNA"/>
</dbReference>
<dbReference type="EMBL" id="AK102356">
    <property type="status" value="NOT_ANNOTATED_CDS"/>
    <property type="molecule type" value="mRNA"/>
</dbReference>
<dbReference type="RefSeq" id="XP_015650120.1">
    <property type="nucleotide sequence ID" value="XM_015794634.1"/>
</dbReference>
<dbReference type="SMR" id="Q84UQ1"/>
<dbReference type="FunCoup" id="Q84UQ1">
    <property type="interactions" value="2698"/>
</dbReference>
<dbReference type="STRING" id="39947.Q84UQ1"/>
<dbReference type="PaxDb" id="39947-Q84UQ1"/>
<dbReference type="EnsemblPlants" id="Os08t0159900-01">
    <property type="protein sequence ID" value="Os08t0159900-01"/>
    <property type="gene ID" value="Os08g0159900"/>
</dbReference>
<dbReference type="Gramene" id="Os08t0159900-01">
    <property type="protein sequence ID" value="Os08t0159900-01"/>
    <property type="gene ID" value="Os08g0159900"/>
</dbReference>
<dbReference type="KEGG" id="dosa:Os08g0159900"/>
<dbReference type="eggNOG" id="KOG0334">
    <property type="taxonomic scope" value="Eukaryota"/>
</dbReference>
<dbReference type="HOGENOM" id="CLU_003041_0_1_1"/>
<dbReference type="InParanoid" id="Q84UQ1"/>
<dbReference type="OMA" id="QLPMKKW"/>
<dbReference type="OrthoDB" id="196131at2759"/>
<dbReference type="Proteomes" id="UP000000763">
    <property type="component" value="Chromosome 8"/>
</dbReference>
<dbReference type="Proteomes" id="UP000007752">
    <property type="component" value="Chromosome 8"/>
</dbReference>
<dbReference type="Proteomes" id="UP000059680">
    <property type="component" value="Chromosome 8"/>
</dbReference>
<dbReference type="ExpressionAtlas" id="Q84UQ1">
    <property type="expression patterns" value="baseline and differential"/>
</dbReference>
<dbReference type="GO" id="GO:0005634">
    <property type="term" value="C:nucleus"/>
    <property type="evidence" value="ECO:0000318"/>
    <property type="project" value="GO_Central"/>
</dbReference>
<dbReference type="GO" id="GO:0005524">
    <property type="term" value="F:ATP binding"/>
    <property type="evidence" value="ECO:0007669"/>
    <property type="project" value="UniProtKB-KW"/>
</dbReference>
<dbReference type="GO" id="GO:0016887">
    <property type="term" value="F:ATP hydrolysis activity"/>
    <property type="evidence" value="ECO:0007669"/>
    <property type="project" value="RHEA"/>
</dbReference>
<dbReference type="GO" id="GO:0003723">
    <property type="term" value="F:RNA binding"/>
    <property type="evidence" value="ECO:0007669"/>
    <property type="project" value="UniProtKB-KW"/>
</dbReference>
<dbReference type="GO" id="GO:0003724">
    <property type="term" value="F:RNA helicase activity"/>
    <property type="evidence" value="ECO:0007669"/>
    <property type="project" value="UniProtKB-EC"/>
</dbReference>
<dbReference type="GO" id="GO:0000398">
    <property type="term" value="P:mRNA splicing, via spliceosome"/>
    <property type="evidence" value="ECO:0000318"/>
    <property type="project" value="GO_Central"/>
</dbReference>
<dbReference type="CDD" id="cd17953">
    <property type="entry name" value="DEADc_DDX46"/>
    <property type="match status" value="1"/>
</dbReference>
<dbReference type="CDD" id="cd22475">
    <property type="entry name" value="KH-I_AtRH42_like"/>
    <property type="match status" value="1"/>
</dbReference>
<dbReference type="CDD" id="cd18787">
    <property type="entry name" value="SF2_C_DEAD"/>
    <property type="match status" value="1"/>
</dbReference>
<dbReference type="FunFam" id="3.40.50.300:FF:000079">
    <property type="entry name" value="probable ATP-dependent RNA helicase DDX17"/>
    <property type="match status" value="1"/>
</dbReference>
<dbReference type="Gene3D" id="3.40.50.300">
    <property type="entry name" value="P-loop containing nucleotide triphosphate hydrolases"/>
    <property type="match status" value="2"/>
</dbReference>
<dbReference type="InterPro" id="IPR011545">
    <property type="entry name" value="DEAD/DEAH_box_helicase_dom"/>
</dbReference>
<dbReference type="InterPro" id="IPR014001">
    <property type="entry name" value="Helicase_ATP-bd"/>
</dbReference>
<dbReference type="InterPro" id="IPR001650">
    <property type="entry name" value="Helicase_C-like"/>
</dbReference>
<dbReference type="InterPro" id="IPR027417">
    <property type="entry name" value="P-loop_NTPase"/>
</dbReference>
<dbReference type="InterPro" id="IPR056149">
    <property type="entry name" value="PRP5/DDX46/KHDC4_KH"/>
</dbReference>
<dbReference type="InterPro" id="IPR000629">
    <property type="entry name" value="RNA-helicase_DEAD-box_CS"/>
</dbReference>
<dbReference type="InterPro" id="IPR014014">
    <property type="entry name" value="RNA_helicase_DEAD_Q_motif"/>
</dbReference>
<dbReference type="PANTHER" id="PTHR47958">
    <property type="entry name" value="ATP-DEPENDENT RNA HELICASE DBP3"/>
    <property type="match status" value="1"/>
</dbReference>
<dbReference type="Pfam" id="PF00270">
    <property type="entry name" value="DEAD"/>
    <property type="match status" value="1"/>
</dbReference>
<dbReference type="Pfam" id="PF00271">
    <property type="entry name" value="Helicase_C"/>
    <property type="match status" value="1"/>
</dbReference>
<dbReference type="Pfam" id="PF23469">
    <property type="entry name" value="KH_12"/>
    <property type="match status" value="1"/>
</dbReference>
<dbReference type="SMART" id="SM00487">
    <property type="entry name" value="DEXDc"/>
    <property type="match status" value="1"/>
</dbReference>
<dbReference type="SMART" id="SM00490">
    <property type="entry name" value="HELICc"/>
    <property type="match status" value="1"/>
</dbReference>
<dbReference type="SUPFAM" id="SSF52540">
    <property type="entry name" value="P-loop containing nucleoside triphosphate hydrolases"/>
    <property type="match status" value="1"/>
</dbReference>
<dbReference type="PROSITE" id="PS00039">
    <property type="entry name" value="DEAD_ATP_HELICASE"/>
    <property type="match status" value="1"/>
</dbReference>
<dbReference type="PROSITE" id="PS51192">
    <property type="entry name" value="HELICASE_ATP_BIND_1"/>
    <property type="match status" value="1"/>
</dbReference>
<dbReference type="PROSITE" id="PS51194">
    <property type="entry name" value="HELICASE_CTER"/>
    <property type="match status" value="1"/>
</dbReference>
<dbReference type="PROSITE" id="PS51195">
    <property type="entry name" value="Q_MOTIF"/>
    <property type="match status" value="1"/>
</dbReference>
<sequence>MGSSDEAGSSKHHRRDKEKDRERSSSRHHRDRDRERSSSRHHHREDRDDDRDRDRDRERRHREKERDREERKAREREEREKEKERERARRREERDREERSRRREAAAEEEEEDVDRDRKRRRRSSHHHHHHRDAEPEGPASGAREEEVVDVEEAERRRQKKKEEEQKQLDEEMETRRRRIKEWQEMKRREEETKRREQEEAGVGTSAAAAAAPAEAEDGGNAGKKWTLDGEESDEEGNQEDGKKSDDNGGSGAGAMDVDVPNGGDNANGANAMDEDEIDPLDAFMNSMVLPEVAKLESMPAANVDDKNDKSAKDAVTNGDKKGPKKVMGRIIQGEDSDSDYADDEDDEGGSEDEDDEEFMKRVKKTKAEKLAIVDHSKIDYQPFRKNFYIEVKDITKMAAEEVAAYRKQLELKVHGKDVPKPIKTWVQSGLTSKLLDTIKKLGFEKPMSIQAQALPIIMSGRDCIGIAKTGSGKTLAFVLPMLRHVKDQPAVVPGDGPIGLIMAPTRELVVQIHSDIKKFSKALGINCVAIYGGSGVAQQISELKRGAEIVVCTPGRMIDILCTSSGKITNLRRVTFLVMDEADRMFDMGFEPQITRIVQNTRPDRQTVLFSATFPRQVEILARKVLTKPVEIQVGGRSVVNKDITQLVEVRPENERFFRLLELLGEWFDKGKILVFVHSQDKCDSLLKDLFQHGYPCLSLHGGKDQTDRESTLADFKSNVCSLLIATSVAARGLDVKELELVVNYDVPNHYEDYVHRVGRTGRAGRKGFAVTFISEEEERYAPDLVKALELSEQAVPEDLKGLADRFMAKVKQGTEQAHGTGYGGSGFKFNEEEDEARKSAKKAQAREYGYEEDKSDSDSDEEGGVRKAGGDLAAQAIAAAQAAAAMVAAKAASNANQQTQGTSVGPLLPLAIASNTQNNEATARALQAAFNIQQNLARIQAHAVPEHYEAELEINDFPQNARWKITHKETLGPIQEWTGAAITTRGTFFPQGKIVGANERKLYLFIEGPTELSVKKAKAELKRVLEDCANHALNLPGSAQTGKYSVI</sequence>
<accession>Q84UQ1</accession>
<accession>B9FZ68</accession>